<proteinExistence type="inferred from homology"/>
<reference key="1">
    <citation type="journal article" date="2003" name="Proc. Natl. Acad. Sci. U.S.A.">
        <title>Complete genome sequence of Lactobacillus plantarum WCFS1.</title>
        <authorList>
            <person name="Kleerebezem M."/>
            <person name="Boekhorst J."/>
            <person name="van Kranenburg R."/>
            <person name="Molenaar D."/>
            <person name="Kuipers O.P."/>
            <person name="Leer R."/>
            <person name="Tarchini R."/>
            <person name="Peters S.A."/>
            <person name="Sandbrink H.M."/>
            <person name="Fiers M.W.E.J."/>
            <person name="Stiekema W."/>
            <person name="Klein Lankhorst R.M."/>
            <person name="Bron P.A."/>
            <person name="Hoffer S.M."/>
            <person name="Nierop Groot M.N."/>
            <person name="Kerkhoven R."/>
            <person name="De Vries M."/>
            <person name="Ursing B."/>
            <person name="De Vos W.M."/>
            <person name="Siezen R.J."/>
        </authorList>
    </citation>
    <scope>NUCLEOTIDE SEQUENCE [LARGE SCALE GENOMIC DNA]</scope>
    <source>
        <strain>ATCC BAA-793 / NCIMB 8826 / WCFS1</strain>
    </source>
</reference>
<reference key="2">
    <citation type="journal article" date="2012" name="J. Bacteriol.">
        <title>Complete resequencing and reannotation of the Lactobacillus plantarum WCFS1 genome.</title>
        <authorList>
            <person name="Siezen R.J."/>
            <person name="Francke C."/>
            <person name="Renckens B."/>
            <person name="Boekhorst J."/>
            <person name="Wels M."/>
            <person name="Kleerebezem M."/>
            <person name="van Hijum S.A."/>
        </authorList>
    </citation>
    <scope>NUCLEOTIDE SEQUENCE [LARGE SCALE GENOMIC DNA]</scope>
    <scope>GENOME REANNOTATION</scope>
    <source>
        <strain>ATCC BAA-793 / NCIMB 8826 / WCFS1</strain>
    </source>
</reference>
<protein>
    <recommendedName>
        <fullName evidence="1">Probable manganese-dependent inorganic pyrophosphatase</fullName>
        <ecNumber evidence="1">3.6.1.1</ecNumber>
    </recommendedName>
    <alternativeName>
        <fullName evidence="1">Pyrophosphate phospho-hydrolase</fullName>
        <shortName evidence="1">PPase</shortName>
    </alternativeName>
</protein>
<dbReference type="EC" id="3.6.1.1" evidence="1"/>
<dbReference type="EMBL" id="AL935263">
    <property type="protein sequence ID" value="CCC79112.1"/>
    <property type="molecule type" value="Genomic_DNA"/>
</dbReference>
<dbReference type="RefSeq" id="WP_003640554.1">
    <property type="nucleotide sequence ID" value="NC_004567.2"/>
</dbReference>
<dbReference type="RefSeq" id="YP_004889626.1">
    <property type="nucleotide sequence ID" value="NC_004567.2"/>
</dbReference>
<dbReference type="SMR" id="Q88W32"/>
<dbReference type="STRING" id="220668.lp_1837"/>
<dbReference type="EnsemblBacteria" id="CCC79112">
    <property type="protein sequence ID" value="CCC79112"/>
    <property type="gene ID" value="lp_1837"/>
</dbReference>
<dbReference type="KEGG" id="lpl:lp_1837"/>
<dbReference type="PATRIC" id="fig|220668.9.peg.1549"/>
<dbReference type="eggNOG" id="COG1227">
    <property type="taxonomic scope" value="Bacteria"/>
</dbReference>
<dbReference type="HOGENOM" id="CLU_025243_0_1_9"/>
<dbReference type="OrthoDB" id="9766150at2"/>
<dbReference type="PhylomeDB" id="Q88W32"/>
<dbReference type="Proteomes" id="UP000000432">
    <property type="component" value="Chromosome"/>
</dbReference>
<dbReference type="GO" id="GO:0005737">
    <property type="term" value="C:cytoplasm"/>
    <property type="evidence" value="ECO:0007669"/>
    <property type="project" value="UniProtKB-SubCell"/>
</dbReference>
<dbReference type="GO" id="GO:0004427">
    <property type="term" value="F:inorganic diphosphate phosphatase activity"/>
    <property type="evidence" value="ECO:0007669"/>
    <property type="project" value="UniProtKB-UniRule"/>
</dbReference>
<dbReference type="GO" id="GO:0030145">
    <property type="term" value="F:manganese ion binding"/>
    <property type="evidence" value="ECO:0007669"/>
    <property type="project" value="UniProtKB-UniRule"/>
</dbReference>
<dbReference type="FunFam" id="3.10.310.20:FF:000001">
    <property type="entry name" value="Probable manganese-dependent inorganic pyrophosphatase"/>
    <property type="match status" value="1"/>
</dbReference>
<dbReference type="FunFam" id="3.90.1640.10:FF:000001">
    <property type="entry name" value="Probable manganese-dependent inorganic pyrophosphatase"/>
    <property type="match status" value="1"/>
</dbReference>
<dbReference type="Gene3D" id="3.10.310.20">
    <property type="entry name" value="DHHA2 domain"/>
    <property type="match status" value="1"/>
</dbReference>
<dbReference type="Gene3D" id="3.90.1640.10">
    <property type="entry name" value="inorganic pyrophosphatase (n-terminal core)"/>
    <property type="match status" value="1"/>
</dbReference>
<dbReference type="HAMAP" id="MF_00207">
    <property type="entry name" value="PPase_C"/>
    <property type="match status" value="1"/>
</dbReference>
<dbReference type="InterPro" id="IPR001667">
    <property type="entry name" value="DDH_dom"/>
</dbReference>
<dbReference type="InterPro" id="IPR038763">
    <property type="entry name" value="DHH_sf"/>
</dbReference>
<dbReference type="InterPro" id="IPR004097">
    <property type="entry name" value="DHHA2"/>
</dbReference>
<dbReference type="InterPro" id="IPR038222">
    <property type="entry name" value="DHHA2_dom_sf"/>
</dbReference>
<dbReference type="InterPro" id="IPR022934">
    <property type="entry name" value="Mn-dep_inorganic_PyrPase"/>
</dbReference>
<dbReference type="NCBIfam" id="NF003877">
    <property type="entry name" value="PRK05427.1"/>
    <property type="match status" value="1"/>
</dbReference>
<dbReference type="PANTHER" id="PTHR12112">
    <property type="entry name" value="BNIP - RELATED"/>
    <property type="match status" value="1"/>
</dbReference>
<dbReference type="PANTHER" id="PTHR12112:SF22">
    <property type="entry name" value="MANGANESE-DEPENDENT INORGANIC PYROPHOSPHATASE-RELATED"/>
    <property type="match status" value="1"/>
</dbReference>
<dbReference type="Pfam" id="PF01368">
    <property type="entry name" value="DHH"/>
    <property type="match status" value="1"/>
</dbReference>
<dbReference type="Pfam" id="PF02833">
    <property type="entry name" value="DHHA2"/>
    <property type="match status" value="1"/>
</dbReference>
<dbReference type="SMART" id="SM01131">
    <property type="entry name" value="DHHA2"/>
    <property type="match status" value="1"/>
</dbReference>
<dbReference type="SUPFAM" id="SSF64182">
    <property type="entry name" value="DHH phosphoesterases"/>
    <property type="match status" value="1"/>
</dbReference>
<comment type="catalytic activity">
    <reaction evidence="1">
        <text>diphosphate + H2O = 2 phosphate + H(+)</text>
        <dbReference type="Rhea" id="RHEA:24576"/>
        <dbReference type="ChEBI" id="CHEBI:15377"/>
        <dbReference type="ChEBI" id="CHEBI:15378"/>
        <dbReference type="ChEBI" id="CHEBI:33019"/>
        <dbReference type="ChEBI" id="CHEBI:43474"/>
        <dbReference type="EC" id="3.6.1.1"/>
    </reaction>
</comment>
<comment type="cofactor">
    <cofactor evidence="1">
        <name>Mn(2+)</name>
        <dbReference type="ChEBI" id="CHEBI:29035"/>
    </cofactor>
    <text evidence="1">Binds 2 manganese ions per subunit.</text>
</comment>
<comment type="subcellular location">
    <subcellularLocation>
        <location evidence="1">Cytoplasm</location>
    </subcellularLocation>
</comment>
<comment type="similarity">
    <text evidence="1">Belongs to the PPase class C family.</text>
</comment>
<organism>
    <name type="scientific">Lactiplantibacillus plantarum (strain ATCC BAA-793 / NCIMB 8826 / WCFS1)</name>
    <name type="common">Lactobacillus plantarum</name>
    <dbReference type="NCBI Taxonomy" id="220668"/>
    <lineage>
        <taxon>Bacteria</taxon>
        <taxon>Bacillati</taxon>
        <taxon>Bacillota</taxon>
        <taxon>Bacilli</taxon>
        <taxon>Lactobacillales</taxon>
        <taxon>Lactobacillaceae</taxon>
        <taxon>Lactiplantibacillus</taxon>
    </lineage>
</organism>
<feature type="chain" id="PRO_0000158574" description="Probable manganese-dependent inorganic pyrophosphatase">
    <location>
        <begin position="1"/>
        <end position="309"/>
    </location>
</feature>
<feature type="binding site" evidence="1">
    <location>
        <position position="9"/>
    </location>
    <ligand>
        <name>Mn(2+)</name>
        <dbReference type="ChEBI" id="CHEBI:29035"/>
        <label>1</label>
    </ligand>
</feature>
<feature type="binding site" evidence="1">
    <location>
        <position position="13"/>
    </location>
    <ligand>
        <name>Mn(2+)</name>
        <dbReference type="ChEBI" id="CHEBI:29035"/>
        <label>1</label>
    </ligand>
</feature>
<feature type="binding site" evidence="1">
    <location>
        <position position="15"/>
    </location>
    <ligand>
        <name>Mn(2+)</name>
        <dbReference type="ChEBI" id="CHEBI:29035"/>
        <label>2</label>
    </ligand>
</feature>
<feature type="binding site" evidence="1">
    <location>
        <position position="75"/>
    </location>
    <ligand>
        <name>Mn(2+)</name>
        <dbReference type="ChEBI" id="CHEBI:29035"/>
        <label>1</label>
    </ligand>
</feature>
<feature type="binding site" evidence="1">
    <location>
        <position position="75"/>
    </location>
    <ligand>
        <name>Mn(2+)</name>
        <dbReference type="ChEBI" id="CHEBI:29035"/>
        <label>2</label>
    </ligand>
</feature>
<feature type="binding site" evidence="1">
    <location>
        <position position="97"/>
    </location>
    <ligand>
        <name>Mn(2+)</name>
        <dbReference type="ChEBI" id="CHEBI:29035"/>
        <label>2</label>
    </ligand>
</feature>
<feature type="binding site" evidence="1">
    <location>
        <position position="149"/>
    </location>
    <ligand>
        <name>Mn(2+)</name>
        <dbReference type="ChEBI" id="CHEBI:29035"/>
        <label>2</label>
    </ligand>
</feature>
<sequence length="309" mass="33620">MSKELVFGHQNPDTDAIVAAKAFSYYENKMGADTEAVALGEPNEETQFVLDYFDEPALRVITKASDEVDSVMLVDHNEPQQSVSDIADVTVSHVVDHHRIAGFDTAQPLFYRAEPLGCCSTVIYKLFKENDIEIPAKLAGLMLSAIISDTLLLKSPTTTETDVAVVKDLAKIADIDYETYGLAMLKAGTNLDSKTEKELIDADAKSFEMAGKTVRVAQINTVDLDDVFKRQAALEAAAKDENASDGYDLFLILATNILDSNSELLVVGNPTEPVEKAFGKTIANNRLSLPGVVSRKKQVVPQLTDAFNA</sequence>
<keyword id="KW-0963">Cytoplasm</keyword>
<keyword id="KW-0378">Hydrolase</keyword>
<keyword id="KW-0464">Manganese</keyword>
<keyword id="KW-0479">Metal-binding</keyword>
<keyword id="KW-1185">Reference proteome</keyword>
<accession>Q88W32</accession>
<accession>F9UPH3</accession>
<gene>
    <name evidence="1" type="primary">ppaC</name>
    <name type="ordered locus">lp_1837</name>
</gene>
<evidence type="ECO:0000255" key="1">
    <source>
        <dbReference type="HAMAP-Rule" id="MF_00207"/>
    </source>
</evidence>
<name>PPAC_LACPL</name>